<name>HSP1_OSPRU</name>
<organism>
    <name type="scientific">Osphranter rufus</name>
    <name type="common">Red kangaroo</name>
    <name type="synonym">Macropus rufus</name>
    <dbReference type="NCBI Taxonomy" id="9321"/>
    <lineage>
        <taxon>Eukaryota</taxon>
        <taxon>Metazoa</taxon>
        <taxon>Chordata</taxon>
        <taxon>Craniata</taxon>
        <taxon>Vertebrata</taxon>
        <taxon>Euteleostomi</taxon>
        <taxon>Mammalia</taxon>
        <taxon>Metatheria</taxon>
        <taxon>Diprotodontia</taxon>
        <taxon>Macropodidae</taxon>
        <taxon>Osphranter</taxon>
    </lineage>
</organism>
<evidence type="ECO:0000256" key="1">
    <source>
        <dbReference type="SAM" id="MobiDB-lite"/>
    </source>
</evidence>
<evidence type="ECO:0000305" key="2"/>
<dbReference type="EMBL" id="L35447">
    <property type="protein sequence ID" value="AAA74616.1"/>
    <property type="molecule type" value="Genomic_DNA"/>
</dbReference>
<dbReference type="GO" id="GO:0000786">
    <property type="term" value="C:nucleosome"/>
    <property type="evidence" value="ECO:0007669"/>
    <property type="project" value="UniProtKB-KW"/>
</dbReference>
<dbReference type="GO" id="GO:0005634">
    <property type="term" value="C:nucleus"/>
    <property type="evidence" value="ECO:0007669"/>
    <property type="project" value="UniProtKB-SubCell"/>
</dbReference>
<dbReference type="GO" id="GO:0003677">
    <property type="term" value="F:DNA binding"/>
    <property type="evidence" value="ECO:0007669"/>
    <property type="project" value="UniProtKB-KW"/>
</dbReference>
<dbReference type="GO" id="GO:0030261">
    <property type="term" value="P:chromosome condensation"/>
    <property type="evidence" value="ECO:0007669"/>
    <property type="project" value="UniProtKB-KW"/>
</dbReference>
<dbReference type="GO" id="GO:0035092">
    <property type="term" value="P:sperm DNA condensation"/>
    <property type="evidence" value="ECO:0007669"/>
    <property type="project" value="InterPro"/>
</dbReference>
<dbReference type="InterPro" id="IPR000221">
    <property type="entry name" value="Protamine_P1"/>
</dbReference>
<dbReference type="PROSITE" id="PS00048">
    <property type="entry name" value="PROTAMINE_P1"/>
    <property type="match status" value="1"/>
</dbReference>
<protein>
    <recommendedName>
        <fullName>Sperm protamine P1</fullName>
    </recommendedName>
</protein>
<sequence>MARYRHSRSRSRSRYRRRRRRRSRYRSQRRRYRGRRRRRSRRGRRRGYSRRRYSRRRRRY</sequence>
<comment type="function">
    <text>Protamines substitute for histones in the chromatin of sperm during the haploid phase of spermatogenesis. They compact sperm DNA into a highly condensed, stable and inactive complex.</text>
</comment>
<comment type="subcellular location">
    <subcellularLocation>
        <location>Nucleus</location>
    </subcellularLocation>
    <subcellularLocation>
        <location>Chromosome</location>
    </subcellularLocation>
</comment>
<comment type="tissue specificity">
    <text>Testis.</text>
</comment>
<comment type="similarity">
    <text evidence="2">Belongs to the protamine P1 family.</text>
</comment>
<keyword id="KW-0158">Chromosome</keyword>
<keyword id="KW-0217">Developmental protein</keyword>
<keyword id="KW-0221">Differentiation</keyword>
<keyword id="KW-0226">DNA condensation</keyword>
<keyword id="KW-0238">DNA-binding</keyword>
<keyword id="KW-0544">Nucleosome core</keyword>
<keyword id="KW-0539">Nucleus</keyword>
<keyword id="KW-0744">Spermatogenesis</keyword>
<gene>
    <name type="primary">PRM1</name>
</gene>
<proteinExistence type="evidence at transcript level"/>
<feature type="chain" id="PRO_0000191494" description="Sperm protamine P1">
    <location>
        <begin position="1"/>
        <end position="60"/>
    </location>
</feature>
<feature type="region of interest" description="Disordered" evidence="1">
    <location>
        <begin position="1"/>
        <end position="60"/>
    </location>
</feature>
<accession>P42142</accession>
<reference key="1">
    <citation type="journal article" date="1995" name="Proc. R. Soc. B">
        <title>Molecular phylogeny and evolution of marsupial protamine P1 genes.</title>
        <authorList>
            <person name="Retief J.D."/>
            <person name="Krajewski C."/>
            <person name="Westerman M."/>
            <person name="Winkfein R.J."/>
            <person name="Dixon G.H."/>
        </authorList>
    </citation>
    <scope>NUCLEOTIDE SEQUENCE [GENOMIC DNA]</scope>
    <source>
        <tissue>Sperm</tissue>
    </source>
</reference>